<accession>Q84C00</accession>
<accession>P29716</accession>
<accession>P37074</accession>
<name>GUB_ACETH</name>
<dbReference type="EC" id="3.2.1.73"/>
<dbReference type="EMBL" id="X58392">
    <property type="protein sequence ID" value="CAA41281.1"/>
    <property type="molecule type" value="Genomic_DNA"/>
</dbReference>
<dbReference type="EMBL" id="AY225318">
    <property type="protein sequence ID" value="AAO74890.1"/>
    <property type="molecule type" value="Genomic_DNA"/>
</dbReference>
<dbReference type="PIR" id="JS0611">
    <property type="entry name" value="JS0611"/>
</dbReference>
<dbReference type="SMR" id="Q84C00"/>
<dbReference type="CAZy" id="GH16">
    <property type="family name" value="Glycoside Hydrolase Family 16"/>
</dbReference>
<dbReference type="BRENDA" id="3.2.1.73">
    <property type="organism ID" value="1530"/>
</dbReference>
<dbReference type="GO" id="GO:0042972">
    <property type="term" value="F:licheninase activity"/>
    <property type="evidence" value="ECO:0007669"/>
    <property type="project" value="UniProtKB-EC"/>
</dbReference>
<dbReference type="GO" id="GO:0000272">
    <property type="term" value="P:polysaccharide catabolic process"/>
    <property type="evidence" value="ECO:0007669"/>
    <property type="project" value="InterPro"/>
</dbReference>
<dbReference type="CDD" id="cd14256">
    <property type="entry name" value="Dockerin_I"/>
    <property type="match status" value="1"/>
</dbReference>
<dbReference type="CDD" id="cd02175">
    <property type="entry name" value="GH16_lichenase"/>
    <property type="match status" value="1"/>
</dbReference>
<dbReference type="Gene3D" id="2.60.120.200">
    <property type="match status" value="1"/>
</dbReference>
<dbReference type="Gene3D" id="1.10.1330.10">
    <property type="entry name" value="Dockerin domain"/>
    <property type="match status" value="1"/>
</dbReference>
<dbReference type="InterPro" id="IPR044791">
    <property type="entry name" value="Beta-glucanase/XTH"/>
</dbReference>
<dbReference type="InterPro" id="IPR008264">
    <property type="entry name" value="Beta_glucanase"/>
</dbReference>
<dbReference type="InterPro" id="IPR013320">
    <property type="entry name" value="ConA-like_dom_sf"/>
</dbReference>
<dbReference type="InterPro" id="IPR002105">
    <property type="entry name" value="Dockerin_1_rpt"/>
</dbReference>
<dbReference type="InterPro" id="IPR016134">
    <property type="entry name" value="Dockerin_dom"/>
</dbReference>
<dbReference type="InterPro" id="IPR036439">
    <property type="entry name" value="Dockerin_dom_sf"/>
</dbReference>
<dbReference type="InterPro" id="IPR018247">
    <property type="entry name" value="EF_Hand_1_Ca_BS"/>
</dbReference>
<dbReference type="InterPro" id="IPR000757">
    <property type="entry name" value="GH16"/>
</dbReference>
<dbReference type="InterPro" id="IPR008263">
    <property type="entry name" value="GH16_AS"/>
</dbReference>
<dbReference type="NCBIfam" id="NF047856">
    <property type="entry name" value="BGlucanaseBglS"/>
    <property type="match status" value="1"/>
</dbReference>
<dbReference type="PANTHER" id="PTHR31062">
    <property type="entry name" value="XYLOGLUCAN ENDOTRANSGLUCOSYLASE/HYDROLASE PROTEIN 8-RELATED"/>
    <property type="match status" value="1"/>
</dbReference>
<dbReference type="Pfam" id="PF00404">
    <property type="entry name" value="Dockerin_1"/>
    <property type="match status" value="1"/>
</dbReference>
<dbReference type="Pfam" id="PF00722">
    <property type="entry name" value="Glyco_hydro_16"/>
    <property type="match status" value="1"/>
</dbReference>
<dbReference type="PRINTS" id="PR00737">
    <property type="entry name" value="GLHYDRLASE16"/>
</dbReference>
<dbReference type="SUPFAM" id="SSF49899">
    <property type="entry name" value="Concanavalin A-like lectins/glucanases"/>
    <property type="match status" value="1"/>
</dbReference>
<dbReference type="SUPFAM" id="SSF63446">
    <property type="entry name" value="Type I dockerin domain"/>
    <property type="match status" value="1"/>
</dbReference>
<dbReference type="PROSITE" id="PS00448">
    <property type="entry name" value="CLOS_CELLULOSOME_RPT"/>
    <property type="match status" value="2"/>
</dbReference>
<dbReference type="PROSITE" id="PS51766">
    <property type="entry name" value="DOCKERIN"/>
    <property type="match status" value="1"/>
</dbReference>
<dbReference type="PROSITE" id="PS00018">
    <property type="entry name" value="EF_HAND_1"/>
    <property type="match status" value="2"/>
</dbReference>
<dbReference type="PROSITE" id="PS01034">
    <property type="entry name" value="GH16_1"/>
    <property type="match status" value="1"/>
</dbReference>
<dbReference type="PROSITE" id="PS51762">
    <property type="entry name" value="GH16_2"/>
    <property type="match status" value="1"/>
</dbReference>
<feature type="signal peptide" evidence="1">
    <location>
        <begin position="1"/>
        <end position="27"/>
    </location>
</feature>
<feature type="chain" id="PRO_0000011792" description="Beta-glucanase">
    <location>
        <begin position="28"/>
        <end position="334"/>
    </location>
</feature>
<feature type="domain" description="GH16" evidence="2">
    <location>
        <begin position="28"/>
        <end position="248"/>
    </location>
</feature>
<feature type="domain" description="Dockerin" evidence="3">
    <location>
        <begin position="267"/>
        <end position="334"/>
    </location>
</feature>
<feature type="region of interest" description="Disordered" evidence="5">
    <location>
        <begin position="246"/>
        <end position="265"/>
    </location>
</feature>
<feature type="active site" description="Nucleophile" evidence="4">
    <location>
        <position position="136"/>
    </location>
</feature>
<feature type="active site" description="Proton donor" evidence="4">
    <location>
        <position position="140"/>
    </location>
</feature>
<feature type="sequence conflict" description="In Ref. 1; CAA41281 and 2." evidence="6" ref="1 2">
    <original>S</original>
    <variation>T</variation>
    <location>
        <position position="97"/>
    </location>
</feature>
<feature type="sequence conflict" description="In Ref. 1; CAA41281 and 2." evidence="6" ref="1 2">
    <original>A</original>
    <variation>V</variation>
    <location>
        <position position="149"/>
    </location>
</feature>
<feature type="sequence conflict" description="In Ref. 1; CAA41281 and 2." evidence="6" ref="1 2">
    <original>E</original>
    <variation>G</variation>
    <location>
        <position position="157"/>
    </location>
</feature>
<feature type="sequence conflict" description="In Ref. 1; CAA41281 and 2." evidence="6" ref="1 2">
    <original>K</original>
    <variation>I</variation>
    <location>
        <position position="218"/>
    </location>
</feature>
<feature type="sequence conflict" description="In Ref. 1; CAA41281." evidence="6" ref="1">
    <original>QSVADVNRDGRIDSTDLTMLKRYLIRAIPSL</original>
    <variation>PQDGCGRHDRVVDSGSK</variation>
    <location>
        <begin position="304"/>
        <end position="334"/>
    </location>
</feature>
<reference key="1">
    <citation type="journal article" date="1991" name="Biochem. Biophys. Res. Commun.">
        <title>Nucleotide sequence of the Clostridium thermocellum laminarinase gene.</title>
        <authorList>
            <person name="Zverlov V.V."/>
            <person name="Laptev D.A."/>
            <person name="Tishkov V.I."/>
            <person name="Velikodvorskaja G.A."/>
        </authorList>
    </citation>
    <scope>PRELIMINARY NUCLEOTIDE SEQUENCE [GENOMIC DNA]</scope>
    <source>
        <strain>F7</strain>
    </source>
</reference>
<reference key="2">
    <citation type="submission" date="1993-08" db="EMBL/GenBank/DDBJ databases">
        <authorList>
            <person name="Zverlov V.V."/>
        </authorList>
    </citation>
    <scope>SEQUENCE REVISION</scope>
</reference>
<reference key="3">
    <citation type="submission" date="2003-01" db="EMBL/GenBank/DDBJ databases">
        <authorList>
            <person name="Lv W.-P."/>
            <person name="Xu Z.-R."/>
            <person name="Li W.-F."/>
            <person name="Sun J.-Y."/>
            <person name="Xu Y.-X."/>
            <person name="Gu S.-H."/>
        </authorList>
    </citation>
    <scope>NUCLEOTIDE SEQUENCE [GENOMIC DNA]</scope>
</reference>
<reference key="4">
    <citation type="journal article" date="1990" name="Biotechnol. Lett.">
        <title>Cloning the Clostridium thermocellum thermostable laminarinase gene in Escherichia coli; the properties of the enzyme thus produced.</title>
        <authorList>
            <person name="Zverlov V.V."/>
            <person name="Velikodvorskaja G.A."/>
        </authorList>
    </citation>
    <scope>CHARACTERIZATION</scope>
    <source>
        <strain>F7</strain>
    </source>
</reference>
<comment type="catalytic activity">
    <reaction>
        <text>Hydrolysis of (1-&gt;4)-beta-D-glucosidic linkages in beta-D-glucans containing (1-&gt;3)- and (1-&gt;4)-bonds.</text>
        <dbReference type="EC" id="3.2.1.73"/>
    </reaction>
</comment>
<comment type="similarity">
    <text evidence="6">Belongs to the glycosyl hydrolase 16 family.</text>
</comment>
<protein>
    <recommendedName>
        <fullName>Beta-glucanase</fullName>
        <ecNumber>3.2.1.73</ecNumber>
    </recommendedName>
    <alternativeName>
        <fullName>1,3-1,4-beta-D-glucan 4-glucanohydrolase</fullName>
    </alternativeName>
    <alternativeName>
        <fullName>Endo-beta-1,3-1,4 glucanase</fullName>
    </alternativeName>
    <alternativeName>
        <fullName>Laminarinase</fullName>
    </alternativeName>
    <alternativeName>
        <fullName>Lichenase</fullName>
    </alternativeName>
</protein>
<proteinExistence type="evidence at protein level"/>
<organism>
    <name type="scientific">Acetivibrio thermocellus</name>
    <name type="common">Hungateiclostridium thermocellum</name>
    <name type="synonym">Clostridium thermocellum</name>
    <dbReference type="NCBI Taxonomy" id="1515"/>
    <lineage>
        <taxon>Bacteria</taxon>
        <taxon>Bacillati</taxon>
        <taxon>Bacillota</taxon>
        <taxon>Clostridia</taxon>
        <taxon>Eubacteriales</taxon>
        <taxon>Oscillospiraceae</taxon>
        <taxon>Acetivibrio</taxon>
    </lineage>
</organism>
<keyword id="KW-0326">Glycosidase</keyword>
<keyword id="KW-0378">Hydrolase</keyword>
<keyword id="KW-0732">Signal</keyword>
<evidence type="ECO:0000255" key="1"/>
<evidence type="ECO:0000255" key="2">
    <source>
        <dbReference type="PROSITE-ProRule" id="PRU01098"/>
    </source>
</evidence>
<evidence type="ECO:0000255" key="3">
    <source>
        <dbReference type="PROSITE-ProRule" id="PRU01102"/>
    </source>
</evidence>
<evidence type="ECO:0000255" key="4">
    <source>
        <dbReference type="PROSITE-ProRule" id="PRU10064"/>
    </source>
</evidence>
<evidence type="ECO:0000256" key="5">
    <source>
        <dbReference type="SAM" id="MobiDB-lite"/>
    </source>
</evidence>
<evidence type="ECO:0000305" key="6"/>
<gene>
    <name type="primary">licB</name>
    <name type="synonym">lam1</name>
</gene>
<sequence length="334" mass="37942">MKNRVISLLMASLLLVLSVIVAPFYKAEAATVVNTPFVAVFSNFDSSQWEKADWANGSVFNCVWKPSQVTFSNGKMILTLDREYGGSYPYKSGEYRSKSFFGYGYYEVRMKAAKNVGIVSSFFTYTGPSDNNPWDEIDIEFLGKDTTKAQFNWYKNEVGGNEYLHNLGFDASQDFHTYGFEWRPDYIDFYVDGKKVYRGTRNIPVTPGKIMMNLWPGKGVDEWLGRYDGRTPLQAEYEYVKYYPNGVPQDNPTPTPTIAPSTPTNPNLPLKGDVNGDGHVNSSDYSLFKRYLLRVIDRFPVGDQSVADVNRDGRIDSTDLTMLKRYLIRAIPSL</sequence>